<feature type="signal peptide" evidence="3">
    <location>
        <begin position="1"/>
        <end position="27"/>
    </location>
</feature>
<feature type="propeptide" id="PRO_0000438113" description="Activation peptide" evidence="19">
    <location>
        <begin position="28"/>
        <end position="136"/>
    </location>
</feature>
<feature type="chain" id="PRO_5007718041" description="Serine protease 7" evidence="19">
    <location>
        <begin position="137"/>
        <end position="391"/>
    </location>
</feature>
<feature type="domain" description="Clip" evidence="6">
    <location>
        <begin position="30"/>
        <end position="84"/>
    </location>
</feature>
<feature type="domain" description="Peptidase S1" evidence="4">
    <location>
        <begin position="137"/>
        <end position="390"/>
    </location>
</feature>
<feature type="region of interest" description="Disordered" evidence="7">
    <location>
        <begin position="91"/>
        <end position="121"/>
    </location>
</feature>
<feature type="active site" description="Charge relay system" evidence="4">
    <location>
        <position position="182"/>
    </location>
</feature>
<feature type="active site" description="Charge relay system" evidence="4">
    <location>
        <position position="244"/>
    </location>
</feature>
<feature type="active site" description="Charge relay system" evidence="4">
    <location>
        <position position="341"/>
    </location>
</feature>
<feature type="binding site" evidence="1">
    <location>
        <position position="202"/>
    </location>
    <ligand>
        <name>Ca(2+)</name>
        <dbReference type="ChEBI" id="CHEBI:29108"/>
    </ligand>
</feature>
<feature type="binding site" evidence="1">
    <location>
        <position position="204"/>
    </location>
    <ligand>
        <name>Ca(2+)</name>
        <dbReference type="ChEBI" id="CHEBI:29108"/>
    </ligand>
</feature>
<feature type="binding site" evidence="1">
    <location>
        <position position="207"/>
    </location>
    <ligand>
        <name>Ca(2+)</name>
        <dbReference type="ChEBI" id="CHEBI:29108"/>
    </ligand>
</feature>
<feature type="binding site" evidence="1">
    <location>
        <position position="210"/>
    </location>
    <ligand>
        <name>Ca(2+)</name>
        <dbReference type="ChEBI" id="CHEBI:29108"/>
    </ligand>
</feature>
<feature type="glycosylation site" description="N-linked (GlcNAc...) asparagine" evidence="5">
    <location>
        <position position="141"/>
    </location>
</feature>
<feature type="disulfide bond" evidence="6">
    <location>
        <begin position="31"/>
        <end position="83"/>
    </location>
</feature>
<feature type="disulfide bond" evidence="6">
    <location>
        <begin position="41"/>
        <end position="72"/>
    </location>
</feature>
<feature type="disulfide bond" evidence="6">
    <location>
        <begin position="47"/>
        <end position="84"/>
    </location>
</feature>
<feature type="disulfide bond" evidence="2">
    <location>
        <begin position="128"/>
        <end position="264"/>
    </location>
</feature>
<feature type="disulfide bond" evidence="4">
    <location>
        <begin position="167"/>
        <end position="183"/>
    </location>
</feature>
<feature type="disulfide bond" evidence="2">
    <location>
        <begin position="211"/>
        <end position="216"/>
    </location>
</feature>
<feature type="disulfide bond" evidence="4">
    <location>
        <begin position="310"/>
        <end position="327"/>
    </location>
</feature>
<feature type="disulfide bond" evidence="4">
    <location>
        <begin position="337"/>
        <end position="366"/>
    </location>
</feature>
<protein>
    <recommendedName>
        <fullName evidence="15">Serine protease 7</fullName>
        <ecNumber evidence="14">3.4.21.-</ecNumber>
    </recommendedName>
    <alternativeName>
        <fullName evidence="17">Melanization protease 2</fullName>
    </alternativeName>
</protein>
<reference evidence="20" key="1">
    <citation type="submission" date="2000-02" db="EMBL/GenBank/DDBJ databases">
        <title>Molecular cloning of a Drosophila serine proteinase homologous to easter.</title>
        <authorList>
            <person name="Ryu J.H."/>
            <person name="Lee W.J."/>
        </authorList>
    </citation>
    <scope>NUCLEOTIDE SEQUENCE [MRNA]</scope>
</reference>
<reference evidence="25" key="2">
    <citation type="journal article" date="2000" name="Science">
        <title>The genome sequence of Drosophila melanogaster.</title>
        <authorList>
            <person name="Adams M.D."/>
            <person name="Celniker S.E."/>
            <person name="Holt R.A."/>
            <person name="Evans C.A."/>
            <person name="Gocayne J.D."/>
            <person name="Amanatides P.G."/>
            <person name="Scherer S.E."/>
            <person name="Li P.W."/>
            <person name="Hoskins R.A."/>
            <person name="Galle R.F."/>
            <person name="George R.A."/>
            <person name="Lewis S.E."/>
            <person name="Richards S."/>
            <person name="Ashburner M."/>
            <person name="Henderson S.N."/>
            <person name="Sutton G.G."/>
            <person name="Wortman J.R."/>
            <person name="Yandell M.D."/>
            <person name="Zhang Q."/>
            <person name="Chen L.X."/>
            <person name="Brandon R.C."/>
            <person name="Rogers Y.-H.C."/>
            <person name="Blazej R.G."/>
            <person name="Champe M."/>
            <person name="Pfeiffer B.D."/>
            <person name="Wan K.H."/>
            <person name="Doyle C."/>
            <person name="Baxter E.G."/>
            <person name="Helt G."/>
            <person name="Nelson C.R."/>
            <person name="Miklos G.L.G."/>
            <person name="Abril J.F."/>
            <person name="Agbayani A."/>
            <person name="An H.-J."/>
            <person name="Andrews-Pfannkoch C."/>
            <person name="Baldwin D."/>
            <person name="Ballew R.M."/>
            <person name="Basu A."/>
            <person name="Baxendale J."/>
            <person name="Bayraktaroglu L."/>
            <person name="Beasley E.M."/>
            <person name="Beeson K.Y."/>
            <person name="Benos P.V."/>
            <person name="Berman B.P."/>
            <person name="Bhandari D."/>
            <person name="Bolshakov S."/>
            <person name="Borkova D."/>
            <person name="Botchan M.R."/>
            <person name="Bouck J."/>
            <person name="Brokstein P."/>
            <person name="Brottier P."/>
            <person name="Burtis K.C."/>
            <person name="Busam D.A."/>
            <person name="Butler H."/>
            <person name="Cadieu E."/>
            <person name="Center A."/>
            <person name="Chandra I."/>
            <person name="Cherry J.M."/>
            <person name="Cawley S."/>
            <person name="Dahlke C."/>
            <person name="Davenport L.B."/>
            <person name="Davies P."/>
            <person name="de Pablos B."/>
            <person name="Delcher A."/>
            <person name="Deng Z."/>
            <person name="Mays A.D."/>
            <person name="Dew I."/>
            <person name="Dietz S.M."/>
            <person name="Dodson K."/>
            <person name="Doup L.E."/>
            <person name="Downes M."/>
            <person name="Dugan-Rocha S."/>
            <person name="Dunkov B.C."/>
            <person name="Dunn P."/>
            <person name="Durbin K.J."/>
            <person name="Evangelista C.C."/>
            <person name="Ferraz C."/>
            <person name="Ferriera S."/>
            <person name="Fleischmann W."/>
            <person name="Fosler C."/>
            <person name="Gabrielian A.E."/>
            <person name="Garg N.S."/>
            <person name="Gelbart W.M."/>
            <person name="Glasser K."/>
            <person name="Glodek A."/>
            <person name="Gong F."/>
            <person name="Gorrell J.H."/>
            <person name="Gu Z."/>
            <person name="Guan P."/>
            <person name="Harris M."/>
            <person name="Harris N.L."/>
            <person name="Harvey D.A."/>
            <person name="Heiman T.J."/>
            <person name="Hernandez J.R."/>
            <person name="Houck J."/>
            <person name="Hostin D."/>
            <person name="Houston K.A."/>
            <person name="Howland T.J."/>
            <person name="Wei M.-H."/>
            <person name="Ibegwam C."/>
            <person name="Jalali M."/>
            <person name="Kalush F."/>
            <person name="Karpen G.H."/>
            <person name="Ke Z."/>
            <person name="Kennison J.A."/>
            <person name="Ketchum K.A."/>
            <person name="Kimmel B.E."/>
            <person name="Kodira C.D."/>
            <person name="Kraft C.L."/>
            <person name="Kravitz S."/>
            <person name="Kulp D."/>
            <person name="Lai Z."/>
            <person name="Lasko P."/>
            <person name="Lei Y."/>
            <person name="Levitsky A.A."/>
            <person name="Li J.H."/>
            <person name="Li Z."/>
            <person name="Liang Y."/>
            <person name="Lin X."/>
            <person name="Liu X."/>
            <person name="Mattei B."/>
            <person name="McIntosh T.C."/>
            <person name="McLeod M.P."/>
            <person name="McPherson D."/>
            <person name="Merkulov G."/>
            <person name="Milshina N.V."/>
            <person name="Mobarry C."/>
            <person name="Morris J."/>
            <person name="Moshrefi A."/>
            <person name="Mount S.M."/>
            <person name="Moy M."/>
            <person name="Murphy B."/>
            <person name="Murphy L."/>
            <person name="Muzny D.M."/>
            <person name="Nelson D.L."/>
            <person name="Nelson D.R."/>
            <person name="Nelson K.A."/>
            <person name="Nixon K."/>
            <person name="Nusskern D.R."/>
            <person name="Pacleb J.M."/>
            <person name="Palazzolo M."/>
            <person name="Pittman G.S."/>
            <person name="Pan S."/>
            <person name="Pollard J."/>
            <person name="Puri V."/>
            <person name="Reese M.G."/>
            <person name="Reinert K."/>
            <person name="Remington K."/>
            <person name="Saunders R.D.C."/>
            <person name="Scheeler F."/>
            <person name="Shen H."/>
            <person name="Shue B.C."/>
            <person name="Siden-Kiamos I."/>
            <person name="Simpson M."/>
            <person name="Skupski M.P."/>
            <person name="Smith T.J."/>
            <person name="Spier E."/>
            <person name="Spradling A.C."/>
            <person name="Stapleton M."/>
            <person name="Strong R."/>
            <person name="Sun E."/>
            <person name="Svirskas R."/>
            <person name="Tector C."/>
            <person name="Turner R."/>
            <person name="Venter E."/>
            <person name="Wang A.H."/>
            <person name="Wang X."/>
            <person name="Wang Z.-Y."/>
            <person name="Wassarman D.A."/>
            <person name="Weinstock G.M."/>
            <person name="Weissenbach J."/>
            <person name="Williams S.M."/>
            <person name="Woodage T."/>
            <person name="Worley K.C."/>
            <person name="Wu D."/>
            <person name="Yang S."/>
            <person name="Yao Q.A."/>
            <person name="Ye J."/>
            <person name="Yeh R.-F."/>
            <person name="Zaveri J.S."/>
            <person name="Zhan M."/>
            <person name="Zhang G."/>
            <person name="Zhao Q."/>
            <person name="Zheng L."/>
            <person name="Zheng X.H."/>
            <person name="Zhong F.N."/>
            <person name="Zhong W."/>
            <person name="Zhou X."/>
            <person name="Zhu S.C."/>
            <person name="Zhu X."/>
            <person name="Smith H.O."/>
            <person name="Gibbs R.A."/>
            <person name="Myers E.W."/>
            <person name="Rubin G.M."/>
            <person name="Venter J.C."/>
        </authorList>
    </citation>
    <scope>NUCLEOTIDE SEQUENCE [LARGE SCALE GENOMIC DNA]</scope>
    <source>
        <strain evidence="25">Berkeley</strain>
    </source>
</reference>
<reference evidence="25" key="3">
    <citation type="journal article" date="2002" name="Genome Biol.">
        <title>Annotation of the Drosophila melanogaster euchromatic genome: a systematic review.</title>
        <authorList>
            <person name="Misra S."/>
            <person name="Crosby M.A."/>
            <person name="Mungall C.J."/>
            <person name="Matthews B.B."/>
            <person name="Campbell K.S."/>
            <person name="Hradecky P."/>
            <person name="Huang Y."/>
            <person name="Kaminker J.S."/>
            <person name="Millburn G.H."/>
            <person name="Prochnik S.E."/>
            <person name="Smith C.D."/>
            <person name="Tupy J.L."/>
            <person name="Whitfield E.J."/>
            <person name="Bayraktaroglu L."/>
            <person name="Berman B.P."/>
            <person name="Bettencourt B.R."/>
            <person name="Celniker S.E."/>
            <person name="de Grey A.D.N.J."/>
            <person name="Drysdale R.A."/>
            <person name="Harris N.L."/>
            <person name="Richter J."/>
            <person name="Russo S."/>
            <person name="Schroeder A.J."/>
            <person name="Shu S.Q."/>
            <person name="Stapleton M."/>
            <person name="Yamada C."/>
            <person name="Ashburner M."/>
            <person name="Gelbart W.M."/>
            <person name="Rubin G.M."/>
            <person name="Lewis S.E."/>
        </authorList>
    </citation>
    <scope>GENOME REANNOTATION</scope>
    <source>
        <strain evidence="25">Berkeley</strain>
    </source>
</reference>
<reference evidence="21" key="4">
    <citation type="journal article" date="2002" name="Genome Biol.">
        <title>A Drosophila full-length cDNA resource.</title>
        <authorList>
            <person name="Stapleton M."/>
            <person name="Carlson J.W."/>
            <person name="Brokstein P."/>
            <person name="Yu C."/>
            <person name="Champe M."/>
            <person name="George R.A."/>
            <person name="Guarin H."/>
            <person name="Kronmiller B."/>
            <person name="Pacleb J.M."/>
            <person name="Park S."/>
            <person name="Wan K.H."/>
            <person name="Rubin G.M."/>
            <person name="Celniker S.E."/>
        </authorList>
    </citation>
    <scope>NUCLEOTIDE SEQUENCE [LARGE SCALE MRNA]</scope>
    <source>
        <strain evidence="21">Berkeley</strain>
        <tissue evidence="21">Embryo</tissue>
    </source>
</reference>
<reference evidence="22" key="5">
    <citation type="journal article" date="2004" name="Genetics">
        <title>Evolutionary expressed sequence tag analysis of Drosophila female reproductive tracts identifies genes subjected to positive selection.</title>
        <authorList>
            <person name="Swanson W.J."/>
            <person name="Wong A."/>
            <person name="Wolfner M.F."/>
            <person name="Aquadro C.F."/>
        </authorList>
    </citation>
    <scope>NUCLEOTIDE SEQUENCE [MRNA] OF 36-359</scope>
</reference>
<reference evidence="23" key="6">
    <citation type="submission" date="2011-06" db="EMBL/GenBank/DDBJ databases">
        <authorList>
            <person name="Carlson J."/>
            <person name="Booth B."/>
            <person name="Frise E."/>
            <person name="Park S."/>
            <person name="Wan K."/>
            <person name="Yu C."/>
            <person name="Celniker S."/>
        </authorList>
    </citation>
    <scope>NUCLEOTIDE SEQUENCE [LARGE SCALE MRNA] OF 151-391</scope>
    <source>
        <tissue evidence="23">Embryo</tissue>
    </source>
</reference>
<reference evidence="18" key="7">
    <citation type="journal article" date="2005" name="Biochem. Biophys. Res. Commun.">
        <title>The serine protease Sp7 is expressed in blood cells and regulates the melanization reaction in Drosophila.</title>
        <authorList>
            <person name="Castillejo-Lopez C."/>
            <person name="Haecker U."/>
        </authorList>
    </citation>
    <scope>FUNCTION</scope>
    <scope>DEVELOPMENTAL STAGE</scope>
    <scope>INDUCTION BY WOUNDING AND BACTERIA</scope>
    <scope>DISRUPTION PHENOTYPE</scope>
</reference>
<reference evidence="18" key="8">
    <citation type="journal article" date="2006" name="EMBO Rep.">
        <title>Prophenoloxidase activation is not required for survival to microbial infections in Drosophila.</title>
        <authorList>
            <person name="Leclerc V."/>
            <person name="Pelte N."/>
            <person name="El Chamy L."/>
            <person name="Martinelli C."/>
            <person name="Ligoxygakis P."/>
            <person name="Hoffmann J.A."/>
            <person name="Reichhart J.M."/>
        </authorList>
    </citation>
    <scope>FUNCTION</scope>
</reference>
<reference evidence="18" key="9">
    <citation type="journal article" date="2006" name="J. Biol. Chem.">
        <title>Two proteases defining a melanization cascade in the immune system of Drosophila.</title>
        <authorList>
            <person name="Tang H."/>
            <person name="Kambris Z."/>
            <person name="Lemaitre B."/>
            <person name="Hashimoto C."/>
        </authorList>
    </citation>
    <scope>FUNCTION</scope>
    <scope>DISRUPTION PHENOTYPE</scope>
</reference>
<reference evidence="18" key="10">
    <citation type="journal article" date="2008" name="Dev. Cell">
        <title>A serpin that regulates immune melanization in the respiratory system of Drosophila.</title>
        <authorList>
            <person name="Tang H."/>
            <person name="Kambris Z."/>
            <person name="Lemaitre B."/>
            <person name="Hashimoto C."/>
        </authorList>
    </citation>
    <scope>FUNCTION</scope>
</reference>
<reference evidence="18" key="11">
    <citation type="journal article" date="2008" name="PLoS Biol.">
        <title>A signaling protease required for melanization in Drosophila affects resistance and tolerance of infections.</title>
        <authorList>
            <person name="Ayres J.S."/>
            <person name="Schneider D.S."/>
        </authorList>
    </citation>
    <scope>FUNCTION</scope>
    <scope>DISRUPTION PHENOTYPE</scope>
</reference>
<reference evidence="18" key="12">
    <citation type="journal article" date="2012" name="EMBO J.">
        <title>Genetic evidence of a redox-dependent systemic wound response via Hayan protease-phenoloxidase system in Drosophila.</title>
        <authorList>
            <person name="Nam H.J."/>
            <person name="Jang I.H."/>
            <person name="You H."/>
            <person name="Lee K.A."/>
            <person name="Lee W.J."/>
        </authorList>
    </citation>
    <scope>DISRUPTION PHENOTYPE</scope>
</reference>
<reference evidence="18" key="13">
    <citation type="journal article" date="2013" name="PLoS ONE">
        <title>Serine protease MP2 activates prophenoloxidase in the melanization immune response of Drosophila melanogaster.</title>
        <authorList>
            <person name="An C."/>
            <person name="Zhang M."/>
            <person name="Chu Y."/>
            <person name="Zhao Z."/>
        </authorList>
    </citation>
    <scope>FUNCTION</scope>
    <scope>CATALYTIC ACTIVITY</scope>
    <scope>INTERACTION WITH SPN27A</scope>
    <scope>SUBCELLULAR LOCATION</scope>
    <scope>CLEAVAGE</scope>
</reference>
<proteinExistence type="evidence at protein level"/>
<dbReference type="EC" id="3.4.21.-" evidence="14"/>
<dbReference type="EMBL" id="AF233093">
    <property type="protein sequence ID" value="AAF43410.1"/>
    <property type="molecule type" value="mRNA"/>
</dbReference>
<dbReference type="EMBL" id="AE014297">
    <property type="protein sequence ID" value="AAF54143.1"/>
    <property type="molecule type" value="Genomic_DNA"/>
</dbReference>
<dbReference type="EMBL" id="AE014297">
    <property type="protein sequence ID" value="AAG22126.1"/>
    <property type="molecule type" value="Genomic_DNA"/>
</dbReference>
<dbReference type="EMBL" id="AE014297">
    <property type="protein sequence ID" value="AAG22127.2"/>
    <property type="molecule type" value="Genomic_DNA"/>
</dbReference>
<dbReference type="EMBL" id="AY060475">
    <property type="protein sequence ID" value="AAL25514.1"/>
    <property type="status" value="ALT_FRAME"/>
    <property type="molecule type" value="mRNA"/>
</dbReference>
<dbReference type="EMBL" id="AY665379">
    <property type="protein sequence ID" value="AAT76546.1"/>
    <property type="molecule type" value="mRNA"/>
</dbReference>
<dbReference type="EMBL" id="BT128742">
    <property type="protein sequence ID" value="AEH59645.1"/>
    <property type="molecule type" value="mRNA"/>
</dbReference>
<dbReference type="RefSeq" id="NP_649734.2">
    <property type="nucleotide sequence ID" value="NM_141477.2"/>
</dbReference>
<dbReference type="RefSeq" id="NP_731174.1">
    <property type="nucleotide sequence ID" value="NM_169192.3"/>
</dbReference>
<dbReference type="RefSeq" id="NP_731175.2">
    <property type="nucleotide sequence ID" value="NM_169193.3"/>
</dbReference>
<dbReference type="SMR" id="Q9V3Z2"/>
<dbReference type="FunCoup" id="Q9V3Z2">
    <property type="interactions" value="44"/>
</dbReference>
<dbReference type="IntAct" id="Q9V3Z2">
    <property type="interactions" value="1"/>
</dbReference>
<dbReference type="STRING" id="7227.FBpp0308322"/>
<dbReference type="MEROPS" id="S01.203"/>
<dbReference type="GlyCosmos" id="Q9V3Z2">
    <property type="glycosylation" value="1 site, No reported glycans"/>
</dbReference>
<dbReference type="GlyGen" id="Q9V3Z2">
    <property type="glycosylation" value="1 site"/>
</dbReference>
<dbReference type="PaxDb" id="7227-FBpp0081237"/>
<dbReference type="DNASU" id="40918"/>
<dbReference type="EnsemblMetazoa" id="FBtr0081740">
    <property type="protein sequence ID" value="FBpp0081237"/>
    <property type="gene ID" value="FBgn0037515"/>
</dbReference>
<dbReference type="EnsemblMetazoa" id="FBtr0339180">
    <property type="protein sequence ID" value="FBpp0308321"/>
    <property type="gene ID" value="FBgn0037515"/>
</dbReference>
<dbReference type="EnsemblMetazoa" id="FBtr0339181">
    <property type="protein sequence ID" value="FBpp0308322"/>
    <property type="gene ID" value="FBgn0037515"/>
</dbReference>
<dbReference type="GeneID" id="40918"/>
<dbReference type="KEGG" id="dme:Dmel_CG3066"/>
<dbReference type="UCSC" id="CG3066-RA">
    <property type="organism name" value="d. melanogaster"/>
</dbReference>
<dbReference type="UCSC" id="CG3066-RB">
    <property type="organism name" value="d. melanogaster"/>
</dbReference>
<dbReference type="AGR" id="FB:FBgn0037515"/>
<dbReference type="CTD" id="121340"/>
<dbReference type="FlyBase" id="FBgn0037515">
    <property type="gene designation" value="Sp7"/>
</dbReference>
<dbReference type="VEuPathDB" id="VectorBase:FBgn0037515"/>
<dbReference type="eggNOG" id="KOG3627">
    <property type="taxonomic scope" value="Eukaryota"/>
</dbReference>
<dbReference type="GeneTree" id="ENSGT00940000171279"/>
<dbReference type="HOGENOM" id="CLU_006842_0_3_1"/>
<dbReference type="InParanoid" id="Q9V3Z2"/>
<dbReference type="OMA" id="MRRAYDQ"/>
<dbReference type="OrthoDB" id="9028152at2759"/>
<dbReference type="PhylomeDB" id="Q9V3Z2"/>
<dbReference type="BioGRID-ORCS" id="40918">
    <property type="hits" value="0 hits in 1 CRISPR screen"/>
</dbReference>
<dbReference type="GenomeRNAi" id="40918"/>
<dbReference type="PRO" id="PR:Q9V3Z2"/>
<dbReference type="Proteomes" id="UP000000803">
    <property type="component" value="Chromosome 3R"/>
</dbReference>
<dbReference type="Bgee" id="FBgn0037515">
    <property type="expression patterns" value="Expressed in second segment of antenna (Drosophila) and 84 other cell types or tissues"/>
</dbReference>
<dbReference type="ExpressionAtlas" id="Q9V3Z2">
    <property type="expression patterns" value="baseline and differential"/>
</dbReference>
<dbReference type="GO" id="GO:0005576">
    <property type="term" value="C:extracellular region"/>
    <property type="evidence" value="ECO:0007005"/>
    <property type="project" value="FlyBase"/>
</dbReference>
<dbReference type="GO" id="GO:0005615">
    <property type="term" value="C:extracellular space"/>
    <property type="evidence" value="ECO:0000318"/>
    <property type="project" value="GO_Central"/>
</dbReference>
<dbReference type="GO" id="GO:0046872">
    <property type="term" value="F:metal ion binding"/>
    <property type="evidence" value="ECO:0007669"/>
    <property type="project" value="UniProtKB-KW"/>
</dbReference>
<dbReference type="GO" id="GO:0004252">
    <property type="term" value="F:serine-type endopeptidase activity"/>
    <property type="evidence" value="ECO:0000255"/>
    <property type="project" value="FlyBase"/>
</dbReference>
<dbReference type="GO" id="GO:0050830">
    <property type="term" value="P:defense response to Gram-positive bacterium"/>
    <property type="evidence" value="ECO:0000315"/>
    <property type="project" value="FlyBase"/>
</dbReference>
<dbReference type="GO" id="GO:0035006">
    <property type="term" value="P:melanization defense response"/>
    <property type="evidence" value="ECO:0000315"/>
    <property type="project" value="FlyBase"/>
</dbReference>
<dbReference type="GO" id="GO:0035008">
    <property type="term" value="P:positive regulation of melanization defense response"/>
    <property type="evidence" value="ECO:0000315"/>
    <property type="project" value="FlyBase"/>
</dbReference>
<dbReference type="GO" id="GO:0006508">
    <property type="term" value="P:proteolysis"/>
    <property type="evidence" value="ECO:0000255"/>
    <property type="project" value="FlyBase"/>
</dbReference>
<dbReference type="CDD" id="cd00190">
    <property type="entry name" value="Tryp_SPc"/>
    <property type="match status" value="1"/>
</dbReference>
<dbReference type="FunFam" id="3.30.1640.30:FF:000001">
    <property type="entry name" value="Serine protease 7"/>
    <property type="match status" value="1"/>
</dbReference>
<dbReference type="FunFam" id="2.40.10.10:FF:000028">
    <property type="entry name" value="Serine protease easter"/>
    <property type="match status" value="1"/>
</dbReference>
<dbReference type="FunFam" id="2.40.10.10:FF:000084">
    <property type="entry name" value="Serine protease easter"/>
    <property type="match status" value="1"/>
</dbReference>
<dbReference type="Gene3D" id="3.30.1640.30">
    <property type="match status" value="1"/>
</dbReference>
<dbReference type="Gene3D" id="2.40.10.10">
    <property type="entry name" value="Trypsin-like serine proteases"/>
    <property type="match status" value="2"/>
</dbReference>
<dbReference type="InterPro" id="IPR022700">
    <property type="entry name" value="CLIP"/>
</dbReference>
<dbReference type="InterPro" id="IPR038565">
    <property type="entry name" value="CLIP_sf"/>
</dbReference>
<dbReference type="InterPro" id="IPR009003">
    <property type="entry name" value="Peptidase_S1_PA"/>
</dbReference>
<dbReference type="InterPro" id="IPR043504">
    <property type="entry name" value="Peptidase_S1_PA_chymotrypsin"/>
</dbReference>
<dbReference type="InterPro" id="IPR001314">
    <property type="entry name" value="Peptidase_S1A"/>
</dbReference>
<dbReference type="InterPro" id="IPR051487">
    <property type="entry name" value="Ser/Thr_Proteases_Immune/Dev"/>
</dbReference>
<dbReference type="InterPro" id="IPR001254">
    <property type="entry name" value="Trypsin_dom"/>
</dbReference>
<dbReference type="InterPro" id="IPR018114">
    <property type="entry name" value="TRYPSIN_HIS"/>
</dbReference>
<dbReference type="InterPro" id="IPR033116">
    <property type="entry name" value="TRYPSIN_SER"/>
</dbReference>
<dbReference type="PANTHER" id="PTHR24256">
    <property type="entry name" value="TRYPTASE-RELATED"/>
    <property type="match status" value="1"/>
</dbReference>
<dbReference type="Pfam" id="PF12032">
    <property type="entry name" value="CLIP"/>
    <property type="match status" value="1"/>
</dbReference>
<dbReference type="Pfam" id="PF00089">
    <property type="entry name" value="Trypsin"/>
    <property type="match status" value="1"/>
</dbReference>
<dbReference type="PRINTS" id="PR00722">
    <property type="entry name" value="CHYMOTRYPSIN"/>
</dbReference>
<dbReference type="SMART" id="SM00680">
    <property type="entry name" value="CLIP"/>
    <property type="match status" value="1"/>
</dbReference>
<dbReference type="SMART" id="SM00020">
    <property type="entry name" value="Tryp_SPc"/>
    <property type="match status" value="1"/>
</dbReference>
<dbReference type="SUPFAM" id="SSF50494">
    <property type="entry name" value="Trypsin-like serine proteases"/>
    <property type="match status" value="1"/>
</dbReference>
<dbReference type="PROSITE" id="PS51888">
    <property type="entry name" value="CLIP"/>
    <property type="match status" value="1"/>
</dbReference>
<dbReference type="PROSITE" id="PS50240">
    <property type="entry name" value="TRYPSIN_DOM"/>
    <property type="match status" value="1"/>
</dbReference>
<dbReference type="PROSITE" id="PS00134">
    <property type="entry name" value="TRYPSIN_HIS"/>
    <property type="match status" value="1"/>
</dbReference>
<dbReference type="PROSITE" id="PS00135">
    <property type="entry name" value="TRYPSIN_SER"/>
    <property type="match status" value="1"/>
</dbReference>
<accession>Q9V3Z2</accession>
<accession>F7VJU2</accession>
<accession>Q6BD09</accession>
<accession>Q95SU8</accession>
<accession>Q9I7L2</accession>
<evidence type="ECO:0000250" key="1">
    <source>
        <dbReference type="UniProtKB" id="O97366"/>
    </source>
</evidence>
<evidence type="ECO:0000250" key="2">
    <source>
        <dbReference type="UniProtKB" id="Q9VB68"/>
    </source>
</evidence>
<evidence type="ECO:0000255" key="3"/>
<evidence type="ECO:0000255" key="4">
    <source>
        <dbReference type="PROSITE-ProRule" id="PRU00274"/>
    </source>
</evidence>
<evidence type="ECO:0000255" key="5">
    <source>
        <dbReference type="PROSITE-ProRule" id="PRU00498"/>
    </source>
</evidence>
<evidence type="ECO:0000255" key="6">
    <source>
        <dbReference type="PROSITE-ProRule" id="PRU01236"/>
    </source>
</evidence>
<evidence type="ECO:0000256" key="7">
    <source>
        <dbReference type="SAM" id="MobiDB-lite"/>
    </source>
</evidence>
<evidence type="ECO:0000269" key="8">
    <source>
    </source>
</evidence>
<evidence type="ECO:0000269" key="9">
    <source>
    </source>
</evidence>
<evidence type="ECO:0000269" key="10">
    <source>
    </source>
</evidence>
<evidence type="ECO:0000269" key="11">
    <source>
    </source>
</evidence>
<evidence type="ECO:0000269" key="12">
    <source>
    </source>
</evidence>
<evidence type="ECO:0000269" key="13">
    <source>
    </source>
</evidence>
<evidence type="ECO:0000269" key="14">
    <source>
    </source>
</evidence>
<evidence type="ECO:0000303" key="15">
    <source>
    </source>
</evidence>
<evidence type="ECO:0000303" key="16">
    <source>
    </source>
</evidence>
<evidence type="ECO:0000303" key="17">
    <source>
    </source>
</evidence>
<evidence type="ECO:0000305" key="18"/>
<evidence type="ECO:0000305" key="19">
    <source>
    </source>
</evidence>
<evidence type="ECO:0000312" key="20">
    <source>
        <dbReference type="EMBL" id="AAF43410.1"/>
    </source>
</evidence>
<evidence type="ECO:0000312" key="21">
    <source>
        <dbReference type="EMBL" id="AAL25514.1"/>
    </source>
</evidence>
<evidence type="ECO:0000312" key="22">
    <source>
        <dbReference type="EMBL" id="AAT76546.1"/>
    </source>
</evidence>
<evidence type="ECO:0000312" key="23">
    <source>
        <dbReference type="EMBL" id="AEH59645.1"/>
    </source>
</evidence>
<evidence type="ECO:0000312" key="24">
    <source>
        <dbReference type="FlyBase" id="FBgn0037515"/>
    </source>
</evidence>
<evidence type="ECO:0000312" key="25">
    <source>
        <dbReference type="Proteomes" id="UP000000803"/>
    </source>
</evidence>
<gene>
    <name evidence="24" type="primary">Sp7</name>
    <name evidence="17" type="synonym">MP2</name>
    <name evidence="16" type="synonym">PAE1</name>
    <name evidence="24" type="ORF">CG3066</name>
</gene>
<keyword id="KW-0106">Calcium</keyword>
<keyword id="KW-1015">Disulfide bond</keyword>
<keyword id="KW-0325">Glycoprotein</keyword>
<keyword id="KW-0378">Hydrolase</keyword>
<keyword id="KW-0479">Metal-binding</keyword>
<keyword id="KW-0645">Protease</keyword>
<keyword id="KW-1185">Reference proteome</keyword>
<keyword id="KW-0964">Secreted</keyword>
<keyword id="KW-0720">Serine protease</keyword>
<keyword id="KW-0732">Signal</keyword>
<keyword id="KW-0865">Zymogen</keyword>
<sequence length="391" mass="43128">MKSTRKVVGIFLATCLLPFTVLQNVAAQGSCRNPNQKQGQCLSIYDCQSLLSVIQQSYVSPEDRTFLRNSQCLDGVGRQPYVCCTSDRSFGSQEATSAAPPPTTTSSSSRGQDGQAGLGNLLPSPPKCGPHSFSNKVYNGNDTAIDEFNWMALLEYVDNRGRRELSCGGSLINNRYVLTAAHCVIGAVETEVGHLTTVRLGEYDTSKDVDCIDDICNQPILQLGIEQATVHPQYDPANKNRIHDIALLRLDRPVVLNEYIQPVCLPLVSTRMAINTGELLVVSGWGRTTTARKSTIKQRLDLPVNDHDYCARKFATRNIHLISSQLCVGGEFYRDSCDGDSGGPLMRRGFDQAWYQEGVVSFGNRCGLEGWPGVYTRVADYMDWIVETIRP</sequence>
<name>SER7_DROME</name>
<comment type="function">
    <text evidence="8 9 10 11 12 14">Serine protease that, by cleaving and activating prophenoloxidase (PPO1) after immune challenge, plays an essential role in the melanization immune response to septic wounding (PubMed:16256951, PubMed:16322759, PubMed:16861233, PubMed:19071960, PubMed:24260243). May function in diverse Hayan-dependent PPO1-activating cascades that are negatively controlled by different serpin proteins; Spn27A in the hemolymph and Spn77BA in the trachea (PubMed:16322759, PubMed:18854145, PubMed:24260243). Important for the innate immune response to fungi (PubMed:16861233). Regulation of melanization and PPO1 activation appears to be largely independent of the Toll signaling pathway (PubMed:16861233).</text>
</comment>
<comment type="subunit">
    <text evidence="14">Interacts with Spn27A.</text>
</comment>
<comment type="subcellular location">
    <subcellularLocation>
        <location evidence="14">Secreted</location>
    </subcellularLocation>
</comment>
<comment type="developmental stage">
    <text evidence="8">First detected in stage 11 embryos, in cells close to the gnathal region. At stage 13, expressed in numerous cells that are dispersed throughout the embryo. During organogenesis predominantly expressed under the cuticle in the proventricular zone close to the hindgut. In L3 larvae, expressed in the lymph glands, the hematopoietic organ that flanks the dorsal vessel and in mature hemolymph crystal cells that appear in clusters attached to diverse organs.</text>
</comment>
<comment type="induction">
    <text evidence="8">Up-regulated after wounding. Levels are higher with septic wounding, using either Gram-negative or Gram-positive bacteria.</text>
</comment>
<comment type="domain">
    <text evidence="6">The clip domain consists of 35-55 residues which are 'knitted' together usually by 3 conserved disulfide bonds forming a clip-like compact structure.</text>
</comment>
<comment type="disruption phenotype">
    <text evidence="8 10 12 13">RNAi-mediated knockdown is semi-pupal lethal, with 50% of pupae dying at the late pupal stage or during eclosion (PubMed:16861233). Adults display impaired melanization at the site of septic infection (septic injury) using either Gram-negative or Gram-positive bacteria (PubMed:16256951, PubMed:16861233, PubMed:19071960). Reduced survival, PPO1 activity and induction of the antimicrobial peptide Drs following septic injury using the fungus B.bassiana (PubMed:16256951, PubMed:16861233). Septic injury with various bacteria reduces survival (L.monocytogenes, S.typhimurium and S.aureus) and in some cases decreases (E.faecelis) or increases bacterial growth (L.monocytogenes, S.typhimurium and B.cepacia). Aseptic injury reduces survival (PubMed:19071960). Aseptic wounding has no effect on survival (PubMed:22227521). Significant increase in survival after immune challenge with S.pneumoniae although there is no increase in melanization (PubMed:19071960). No effect on the survival following infection with various bacteria (E.coli, B.cepacia and E.faecelis) (PubMed:19071960). No induction of the antimicrobial peptides Drs and Dpt following infection with E.carotovora (PubMed:16861233).</text>
</comment>
<comment type="similarity">
    <text evidence="6">Belongs to the peptidase S1 family. CLIP subfamily.</text>
</comment>
<comment type="sequence caution" evidence="18">
    <conflict type="frameshift">
        <sequence resource="EMBL-CDS" id="AAL25514"/>
    </conflict>
</comment>
<organism evidence="25">
    <name type="scientific">Drosophila melanogaster</name>
    <name type="common">Fruit fly</name>
    <dbReference type="NCBI Taxonomy" id="7227"/>
    <lineage>
        <taxon>Eukaryota</taxon>
        <taxon>Metazoa</taxon>
        <taxon>Ecdysozoa</taxon>
        <taxon>Arthropoda</taxon>
        <taxon>Hexapoda</taxon>
        <taxon>Insecta</taxon>
        <taxon>Pterygota</taxon>
        <taxon>Neoptera</taxon>
        <taxon>Endopterygota</taxon>
        <taxon>Diptera</taxon>
        <taxon>Brachycera</taxon>
        <taxon>Muscomorpha</taxon>
        <taxon>Ephydroidea</taxon>
        <taxon>Drosophilidae</taxon>
        <taxon>Drosophila</taxon>
        <taxon>Sophophora</taxon>
    </lineage>
</organism>